<gene>
    <name evidence="1" type="primary">L2</name>
</gene>
<accession>Q02276</accession>
<name>VL2_PCPV1</name>
<proteinExistence type="inferred from homology"/>
<evidence type="ECO:0000255" key="1">
    <source>
        <dbReference type="HAMAP-Rule" id="MF_04003"/>
    </source>
</evidence>
<dbReference type="EMBL" id="X62844">
    <property type="protein sequence ID" value="CAA44661.1"/>
    <property type="molecule type" value="Genomic_DNA"/>
</dbReference>
<dbReference type="Proteomes" id="UP000000469">
    <property type="component" value="Genome"/>
</dbReference>
<dbReference type="GO" id="GO:0043657">
    <property type="term" value="C:host cell"/>
    <property type="evidence" value="ECO:0007669"/>
    <property type="project" value="GOC"/>
</dbReference>
<dbReference type="GO" id="GO:0044174">
    <property type="term" value="C:host cell endosome"/>
    <property type="evidence" value="ECO:0007669"/>
    <property type="project" value="UniProtKB-KW"/>
</dbReference>
<dbReference type="GO" id="GO:0044177">
    <property type="term" value="C:host cell Golgi apparatus"/>
    <property type="evidence" value="ECO:0007669"/>
    <property type="project" value="UniProtKB-SubCell"/>
</dbReference>
<dbReference type="GO" id="GO:0042025">
    <property type="term" value="C:host cell nucleus"/>
    <property type="evidence" value="ECO:0007669"/>
    <property type="project" value="UniProtKB-SubCell"/>
</dbReference>
<dbReference type="GO" id="GO:0019028">
    <property type="term" value="C:viral capsid"/>
    <property type="evidence" value="ECO:0007669"/>
    <property type="project" value="UniProtKB-UniRule"/>
</dbReference>
<dbReference type="GO" id="GO:0003677">
    <property type="term" value="F:DNA binding"/>
    <property type="evidence" value="ECO:0007669"/>
    <property type="project" value="UniProtKB-UniRule"/>
</dbReference>
<dbReference type="GO" id="GO:0005198">
    <property type="term" value="F:structural molecule activity"/>
    <property type="evidence" value="ECO:0007669"/>
    <property type="project" value="UniProtKB-UniRule"/>
</dbReference>
<dbReference type="GO" id="GO:0075521">
    <property type="term" value="P:microtubule-dependent intracellular transport of viral material towards nucleus"/>
    <property type="evidence" value="ECO:0007669"/>
    <property type="project" value="UniProtKB-UniRule"/>
</dbReference>
<dbReference type="GO" id="GO:0046718">
    <property type="term" value="P:symbiont entry into host cell"/>
    <property type="evidence" value="ECO:0007669"/>
    <property type="project" value="UniProtKB-KW"/>
</dbReference>
<dbReference type="GO" id="GO:0075732">
    <property type="term" value="P:viral penetration into host nucleus"/>
    <property type="evidence" value="ECO:0007669"/>
    <property type="project" value="UniProtKB-KW"/>
</dbReference>
<dbReference type="HAMAP" id="MF_04003">
    <property type="entry name" value="PPV_L2"/>
    <property type="match status" value="1"/>
</dbReference>
<dbReference type="InterPro" id="IPR000784">
    <property type="entry name" value="Late_L2"/>
</dbReference>
<dbReference type="Pfam" id="PF00513">
    <property type="entry name" value="Late_protein_L2"/>
    <property type="match status" value="1"/>
</dbReference>
<sequence>MAHSRPRRRKRASATQLYQTCKASGTCPPDIIAKVEQNTLADKILKWGSLGVFFGGLGIGTGSGTGGRTGYVPVQTAPRPAIPFGPTARPPIIVDTVGPSDSSIVSLVEDSTIINSAASDFVPPIREGFEISTSETTTPAILDVSVTTHNTTSTSIFKNPAFAEPSIVQSQPSVEASGHVLTSTYTSTISSHSVEDIPLDTFIVSSSDSNPASSTPVPTPVARPRLGLYSKALQQVQVTNPAFLSSPQRLITFDNPAYEGEDISLQFQHNTIHNPPDDAFMDIVRLHRPAITSRRGIVRFSRIGQRGSMYTRSGKHIGGRVHFYTDISPISAAAEELEMQPLVAAAQDDSGLFDVYVDPTPGPVAVQNMSYPSSTSFVRSSMFTTKWGNTTVPLSLPSNIFAQPGPDIIFPAAPGVPPYNPVIPSLPITPIFISGSQFYLHPSLYLARKRRKRVSLFFADVAA</sequence>
<keyword id="KW-0167">Capsid protein</keyword>
<keyword id="KW-1176">Cytoplasmic inwards viral transport</keyword>
<keyword id="KW-1015">Disulfide bond</keyword>
<keyword id="KW-0238">DNA-binding</keyword>
<keyword id="KW-1039">Host endosome</keyword>
<keyword id="KW-1040">Host Golgi apparatus</keyword>
<keyword id="KW-1048">Host nucleus</keyword>
<keyword id="KW-0945">Host-virus interaction</keyword>
<keyword id="KW-0426">Late protein</keyword>
<keyword id="KW-1177">Microtubular inwards viral transport</keyword>
<keyword id="KW-0597">Phosphoprotein</keyword>
<keyword id="KW-1185">Reference proteome</keyword>
<keyword id="KW-1163">Viral penetration into host nucleus</keyword>
<keyword id="KW-0946">Virion</keyword>
<keyword id="KW-1160">Virus entry into host cell</keyword>
<comment type="function">
    <text evidence="1">Minor protein of the capsid that localizes along the inner surface of the virion, within the central cavities beneath the L1 pentamers. Plays a role in capsid stabilization through interaction with the major capsid protein L1. Once the virion enters the host cell, L2 escorts the genomic DNA into the nucleus by promoting escape from the endosomal compartments and traffic through the host Golgi network. Mechanistically, the C-terminus of L2 possesses a cell-penetrating peptide that protudes from the host endosome, interacts with host cytoplasmic retromer cargo and thereby mediates the capsid delivery to the host trans-Golgi network. Plays a role through its interaction with host dynein in the intracellular microtubule-dependent transport of viral capsid toward the nucleus. Mediates the viral genome import into the nucleus through binding to host importins. Once within the nucleus, L2 localizes viral genomes to host PML bodies in order to activate early gene expression for establishment of infection. Later on, promotes late gene expression by interacting with the viral E2 protein and by inhibiting its transcriptional activation functions. During virion assembly, encapsidates the genome by direct interaction with the viral DNA.</text>
</comment>
<comment type="subunit">
    <text evidence="1">Interacts with major capsid protein L1. Interacts with E2; this interaction inhibits E2 transcriptional activity but not the DNA replication function E2. Interacts with host GADD45GIP1. Interacts with host HSPA8; this interaction is required for L2 nuclear translocation. Interacts with host importins KPNB2 and KPNB3. Forms a complex with importin alpha2-beta1 heterodimers via interaction with the importin alpha2 adapter. Interacts with host DYNLT1; this interaction is essential for virus intracellular transport during entry. Interacts (via C-terminus) with host retromer subunits VPS35 and VPS29.</text>
</comment>
<comment type="subcellular location">
    <subcellularLocation>
        <location evidence="1">Virion</location>
    </subcellularLocation>
    <subcellularLocation>
        <location evidence="1">Host nucleus</location>
    </subcellularLocation>
    <subcellularLocation>
        <location evidence="1">Host early endosome</location>
    </subcellularLocation>
    <subcellularLocation>
        <location evidence="1">Host Golgi apparatus</location>
    </subcellularLocation>
</comment>
<comment type="PTM">
    <text evidence="1">Highly phosphorylated.</text>
</comment>
<comment type="similarity">
    <text evidence="1">Belongs to the papillomaviridae L2 protein family.</text>
</comment>
<organism>
    <name type="scientific">Pygmy chimpanzee papillomavirus type 1</name>
    <name type="common">PCPV-1</name>
    <dbReference type="NCBI Taxonomy" id="10576"/>
    <lineage>
        <taxon>Viruses</taxon>
        <taxon>Monodnaviria</taxon>
        <taxon>Shotokuvirae</taxon>
        <taxon>Cossaviricota</taxon>
        <taxon>Papovaviricetes</taxon>
        <taxon>Zurhausenvirales</taxon>
        <taxon>Papillomaviridae</taxon>
        <taxon>Firstpapillomavirinae</taxon>
        <taxon>Alphapapillomavirus</taxon>
        <taxon>Alphapapillomavirus 10</taxon>
    </lineage>
</organism>
<protein>
    <recommendedName>
        <fullName evidence="1">Minor capsid protein L2</fullName>
    </recommendedName>
</protein>
<organismHost>
    <name type="scientific">Pan paniscus</name>
    <name type="common">Pygmy chimpanzee</name>
    <name type="synonym">Bonobo</name>
    <dbReference type="NCBI Taxonomy" id="9597"/>
</organismHost>
<reference key="1">
    <citation type="journal article" date="1992" name="Virology">
        <title>Human papillomavirus type 13 and pygmy chimpanzee papillomavirus type 1: comparison of the genome organizations.</title>
        <authorList>
            <person name="van Ranst M."/>
            <person name="Fuse A."/>
            <person name="Fiten P."/>
            <person name="Beuken E."/>
            <person name="Pfister H."/>
            <person name="Burk R.D."/>
            <person name="Opdenakker G."/>
        </authorList>
    </citation>
    <scope>NUCLEOTIDE SEQUENCE [GENOMIC DNA]</scope>
</reference>
<feature type="chain" id="PRO_0000133635" description="Minor capsid protein L2">
    <location>
        <begin position="1"/>
        <end position="463"/>
    </location>
</feature>
<feature type="short sequence motif" description="Nuclear localization signal" evidence="1">
    <location>
        <begin position="1"/>
        <end position="12"/>
    </location>
</feature>
<feature type="short sequence motif" description="Nuclear localization signal" evidence="1">
    <location>
        <begin position="446"/>
        <end position="454"/>
    </location>
</feature>
<feature type="disulfide bond" evidence="1">
    <location>
        <begin position="21"/>
        <end position="27"/>
    </location>
</feature>